<dbReference type="EMBL" id="FM204884">
    <property type="protein sequence ID" value="CAX00869.1"/>
    <property type="molecule type" value="Genomic_DNA"/>
</dbReference>
<dbReference type="SMR" id="C0MGP5"/>
<dbReference type="KEGG" id="seq:SZO_19070"/>
<dbReference type="eggNOG" id="COG0522">
    <property type="taxonomic scope" value="Bacteria"/>
</dbReference>
<dbReference type="HOGENOM" id="CLU_092403_0_1_9"/>
<dbReference type="Proteomes" id="UP000001368">
    <property type="component" value="Chromosome"/>
</dbReference>
<dbReference type="GO" id="GO:0015935">
    <property type="term" value="C:small ribosomal subunit"/>
    <property type="evidence" value="ECO:0007669"/>
    <property type="project" value="InterPro"/>
</dbReference>
<dbReference type="GO" id="GO:0019843">
    <property type="term" value="F:rRNA binding"/>
    <property type="evidence" value="ECO:0007669"/>
    <property type="project" value="UniProtKB-UniRule"/>
</dbReference>
<dbReference type="GO" id="GO:0003735">
    <property type="term" value="F:structural constituent of ribosome"/>
    <property type="evidence" value="ECO:0007669"/>
    <property type="project" value="InterPro"/>
</dbReference>
<dbReference type="GO" id="GO:0042274">
    <property type="term" value="P:ribosomal small subunit biogenesis"/>
    <property type="evidence" value="ECO:0007669"/>
    <property type="project" value="TreeGrafter"/>
</dbReference>
<dbReference type="GO" id="GO:0006412">
    <property type="term" value="P:translation"/>
    <property type="evidence" value="ECO:0007669"/>
    <property type="project" value="UniProtKB-UniRule"/>
</dbReference>
<dbReference type="CDD" id="cd00165">
    <property type="entry name" value="S4"/>
    <property type="match status" value="1"/>
</dbReference>
<dbReference type="FunFam" id="1.10.1050.10:FF:000001">
    <property type="entry name" value="30S ribosomal protein S4"/>
    <property type="match status" value="1"/>
</dbReference>
<dbReference type="FunFam" id="3.10.290.10:FF:000001">
    <property type="entry name" value="30S ribosomal protein S4"/>
    <property type="match status" value="1"/>
</dbReference>
<dbReference type="Gene3D" id="1.10.1050.10">
    <property type="entry name" value="Ribosomal Protein S4 Delta 41, Chain A, domain 1"/>
    <property type="match status" value="1"/>
</dbReference>
<dbReference type="Gene3D" id="3.10.290.10">
    <property type="entry name" value="RNA-binding S4 domain"/>
    <property type="match status" value="1"/>
</dbReference>
<dbReference type="HAMAP" id="MF_01306_B">
    <property type="entry name" value="Ribosomal_uS4_B"/>
    <property type="match status" value="1"/>
</dbReference>
<dbReference type="InterPro" id="IPR022801">
    <property type="entry name" value="Ribosomal_uS4"/>
</dbReference>
<dbReference type="InterPro" id="IPR005709">
    <property type="entry name" value="Ribosomal_uS4_bac-type"/>
</dbReference>
<dbReference type="InterPro" id="IPR018079">
    <property type="entry name" value="Ribosomal_uS4_CS"/>
</dbReference>
<dbReference type="InterPro" id="IPR001912">
    <property type="entry name" value="Ribosomal_uS4_N"/>
</dbReference>
<dbReference type="InterPro" id="IPR002942">
    <property type="entry name" value="S4_RNA-bd"/>
</dbReference>
<dbReference type="InterPro" id="IPR036986">
    <property type="entry name" value="S4_RNA-bd_sf"/>
</dbReference>
<dbReference type="NCBIfam" id="NF003717">
    <property type="entry name" value="PRK05327.1"/>
    <property type="match status" value="1"/>
</dbReference>
<dbReference type="NCBIfam" id="TIGR01017">
    <property type="entry name" value="rpsD_bact"/>
    <property type="match status" value="1"/>
</dbReference>
<dbReference type="PANTHER" id="PTHR11831">
    <property type="entry name" value="30S 40S RIBOSOMAL PROTEIN"/>
    <property type="match status" value="1"/>
</dbReference>
<dbReference type="PANTHER" id="PTHR11831:SF4">
    <property type="entry name" value="SMALL RIBOSOMAL SUBUNIT PROTEIN US4M"/>
    <property type="match status" value="1"/>
</dbReference>
<dbReference type="Pfam" id="PF00163">
    <property type="entry name" value="Ribosomal_S4"/>
    <property type="match status" value="1"/>
</dbReference>
<dbReference type="Pfam" id="PF01479">
    <property type="entry name" value="S4"/>
    <property type="match status" value="1"/>
</dbReference>
<dbReference type="SMART" id="SM01390">
    <property type="entry name" value="Ribosomal_S4"/>
    <property type="match status" value="1"/>
</dbReference>
<dbReference type="SMART" id="SM00363">
    <property type="entry name" value="S4"/>
    <property type="match status" value="1"/>
</dbReference>
<dbReference type="SUPFAM" id="SSF55174">
    <property type="entry name" value="Alpha-L RNA-binding motif"/>
    <property type="match status" value="1"/>
</dbReference>
<dbReference type="PROSITE" id="PS00632">
    <property type="entry name" value="RIBOSOMAL_S4"/>
    <property type="match status" value="1"/>
</dbReference>
<dbReference type="PROSITE" id="PS50889">
    <property type="entry name" value="S4"/>
    <property type="match status" value="1"/>
</dbReference>
<reference key="1">
    <citation type="journal article" date="2009" name="PLoS Pathog.">
        <title>Genomic evidence for the evolution of Streptococcus equi: host restriction, increased virulence, and genetic exchange with human pathogens.</title>
        <authorList>
            <person name="Holden M.T.G."/>
            <person name="Heather Z."/>
            <person name="Paillot R."/>
            <person name="Steward K.F."/>
            <person name="Webb K."/>
            <person name="Ainslie F."/>
            <person name="Jourdan T."/>
            <person name="Bason N.C."/>
            <person name="Holroyd N.E."/>
            <person name="Mungall K."/>
            <person name="Quail M.A."/>
            <person name="Sanders M."/>
            <person name="Simmonds M."/>
            <person name="Willey D."/>
            <person name="Brooks K."/>
            <person name="Aanensen D.M."/>
            <person name="Spratt B.G."/>
            <person name="Jolley K.A."/>
            <person name="Maiden M.C.J."/>
            <person name="Kehoe M."/>
            <person name="Chanter N."/>
            <person name="Bentley S.D."/>
            <person name="Robinson C."/>
            <person name="Maskell D.J."/>
            <person name="Parkhill J."/>
            <person name="Waller A.S."/>
        </authorList>
    </citation>
    <scope>NUCLEOTIDE SEQUENCE [LARGE SCALE GENOMIC DNA]</scope>
    <source>
        <strain>H70</strain>
    </source>
</reference>
<comment type="function">
    <text evidence="1">One of the primary rRNA binding proteins, it binds directly to 16S rRNA where it nucleates assembly of the body of the 30S subunit.</text>
</comment>
<comment type="function">
    <text evidence="1">With S5 and S12 plays an important role in translational accuracy.</text>
</comment>
<comment type="subunit">
    <text evidence="1">Part of the 30S ribosomal subunit. Contacts protein S5. The interaction surface between S4 and S5 is involved in control of translational fidelity.</text>
</comment>
<comment type="similarity">
    <text evidence="1">Belongs to the universal ribosomal protein uS4 family.</text>
</comment>
<name>RS4_STRS7</name>
<protein>
    <recommendedName>
        <fullName evidence="1">Small ribosomal subunit protein uS4</fullName>
    </recommendedName>
    <alternativeName>
        <fullName evidence="2">30S ribosomal protein S4</fullName>
    </alternativeName>
</protein>
<sequence>MSRYTGPSWKQSRRLGLSLTGTGKELARRNYVPGQHGPNNRSKLSEYGLQLAEKQKLRFSYGMGEKQFRNLFVQATKIKEGTLGFNFMLLLERRLDNVVYRLGLATTRRQARQFVNHGHILVDGKRVDIPSFRVEIGQVISVREKSMKVPAILEAVEATLGRPAFVSFDAEKLEGSLTRLPERDEINPEINEALVVEFYNKML</sequence>
<feature type="chain" id="PRO_1000214302" description="Small ribosomal subunit protein uS4">
    <location>
        <begin position="1"/>
        <end position="203"/>
    </location>
</feature>
<feature type="domain" description="S4 RNA-binding" evidence="1">
    <location>
        <begin position="93"/>
        <end position="156"/>
    </location>
</feature>
<gene>
    <name evidence="1" type="primary">rpsD</name>
    <name type="ordered locus">SZO_19070</name>
</gene>
<organism>
    <name type="scientific">Streptococcus equi subsp. zooepidemicus (strain H70)</name>
    <dbReference type="NCBI Taxonomy" id="553483"/>
    <lineage>
        <taxon>Bacteria</taxon>
        <taxon>Bacillati</taxon>
        <taxon>Bacillota</taxon>
        <taxon>Bacilli</taxon>
        <taxon>Lactobacillales</taxon>
        <taxon>Streptococcaceae</taxon>
        <taxon>Streptococcus</taxon>
    </lineage>
</organism>
<accession>C0MGP5</accession>
<keyword id="KW-0687">Ribonucleoprotein</keyword>
<keyword id="KW-0689">Ribosomal protein</keyword>
<keyword id="KW-0694">RNA-binding</keyword>
<keyword id="KW-0699">rRNA-binding</keyword>
<proteinExistence type="inferred from homology"/>
<evidence type="ECO:0000255" key="1">
    <source>
        <dbReference type="HAMAP-Rule" id="MF_01306"/>
    </source>
</evidence>
<evidence type="ECO:0000305" key="2"/>